<comment type="function">
    <text evidence="1">Component of a Polycomb group (PcG) multiprotein PRC1-like complex, a complex class required to maintain the transcriptionally repressive state of many genes, including Hox genes, throughout development. PcG PRC1 complex acts via chromatin remodeling and modification of histones; it mediates monoubiquitination of histone H2A 'Lys-119', rendering chromatin heritably changed in its expressibility (By similarity).</text>
</comment>
<comment type="subunit">
    <text evidence="2">Component of a PRC1-like complex.</text>
</comment>
<comment type="subcellular location">
    <subcellularLocation>
        <location evidence="2">Nucleus</location>
    </subcellularLocation>
</comment>
<comment type="alternative products">
    <event type="alternative splicing"/>
    <isoform>
        <id>Q8QHL5-1</id>
        <name>1</name>
        <name>ph2-alpha</name>
        <sequence type="displayed"/>
    </isoform>
    <isoform>
        <id>Q8QHL5-2</id>
        <name>2</name>
        <name>ph2-beta</name>
        <sequence type="described" ref="VSP_016920"/>
    </isoform>
</comment>
<comment type="tissue specificity">
    <text>Isoform 1 expression is stronger at the posterior border than in the anterior region within individual somites; On the contrary, isoform 2 expression is higher at the posterior border.</text>
</comment>
<comment type="developmental stage">
    <text>Isoform 1 is expressed during the segmentation period and is initially detected at the 7-8 somite stage; Isoform 2 is expressed at all developmental stages and appears in the first somites.</text>
</comment>
<name>PHC2_DANRE</name>
<evidence type="ECO:0000250" key="1"/>
<evidence type="ECO:0000250" key="2">
    <source>
        <dbReference type="UniProtKB" id="Q8IXK0"/>
    </source>
</evidence>
<evidence type="ECO:0000250" key="3">
    <source>
        <dbReference type="UniProtKB" id="Q9QWH1"/>
    </source>
</evidence>
<evidence type="ECO:0000255" key="4">
    <source>
        <dbReference type="PROSITE-ProRule" id="PRU00184"/>
    </source>
</evidence>
<evidence type="ECO:0000255" key="5">
    <source>
        <dbReference type="PROSITE-ProRule" id="PRU00367"/>
    </source>
</evidence>
<evidence type="ECO:0000256" key="6">
    <source>
        <dbReference type="SAM" id="MobiDB-lite"/>
    </source>
</evidence>
<evidence type="ECO:0000303" key="7">
    <source>
    </source>
</evidence>
<evidence type="ECO:0000303" key="8">
    <source>
    </source>
</evidence>
<evidence type="ECO:0000303" key="9">
    <source ref="3"/>
</evidence>
<evidence type="ECO:0000305" key="10"/>
<feature type="chain" id="PRO_0000076288" description="Polyhomeotic-like protein 2">
    <location>
        <begin position="1"/>
        <end position="827"/>
    </location>
</feature>
<feature type="domain" description="SAM" evidence="4">
    <location>
        <begin position="763"/>
        <end position="827"/>
    </location>
</feature>
<feature type="zinc finger region" description="FCS-type" evidence="5">
    <location>
        <begin position="609"/>
        <end position="643"/>
    </location>
</feature>
<feature type="region of interest" description="Disordered" evidence="3">
    <location>
        <begin position="1"/>
        <end position="78"/>
    </location>
</feature>
<feature type="region of interest" description="Disordered" evidence="6">
    <location>
        <begin position="282"/>
        <end position="316"/>
    </location>
</feature>
<feature type="region of interest" description="Disordered" evidence="6">
    <location>
        <begin position="482"/>
        <end position="545"/>
    </location>
</feature>
<feature type="region of interest" description="Disordered" evidence="6">
    <location>
        <begin position="653"/>
        <end position="730"/>
    </location>
</feature>
<feature type="short sequence motif" description="HD1">
    <location>
        <begin position="540"/>
        <end position="570"/>
    </location>
</feature>
<feature type="compositionally biased region" description="Low complexity" evidence="6">
    <location>
        <begin position="9"/>
        <end position="38"/>
    </location>
</feature>
<feature type="compositionally biased region" description="Basic and acidic residues" evidence="6">
    <location>
        <begin position="485"/>
        <end position="498"/>
    </location>
</feature>
<feature type="compositionally biased region" description="Polar residues" evidence="6">
    <location>
        <begin position="517"/>
        <end position="538"/>
    </location>
</feature>
<feature type="compositionally biased region" description="Basic and acidic residues" evidence="6">
    <location>
        <begin position="661"/>
        <end position="675"/>
    </location>
</feature>
<feature type="compositionally biased region" description="Polar residues" evidence="6">
    <location>
        <begin position="687"/>
        <end position="696"/>
    </location>
</feature>
<feature type="compositionally biased region" description="Polar residues" evidence="6">
    <location>
        <begin position="708"/>
        <end position="717"/>
    </location>
</feature>
<feature type="binding site" evidence="5">
    <location>
        <position position="618"/>
    </location>
    <ligand>
        <name>Zn(2+)</name>
        <dbReference type="ChEBI" id="CHEBI:29105"/>
    </ligand>
</feature>
<feature type="binding site" evidence="5">
    <location>
        <position position="621"/>
    </location>
    <ligand>
        <name>Zn(2+)</name>
        <dbReference type="ChEBI" id="CHEBI:29105"/>
    </ligand>
</feature>
<feature type="binding site" evidence="5">
    <location>
        <position position="637"/>
    </location>
    <ligand>
        <name>Zn(2+)</name>
        <dbReference type="ChEBI" id="CHEBI:29105"/>
    </ligand>
</feature>
<feature type="binding site" evidence="5">
    <location>
        <position position="641"/>
    </location>
    <ligand>
        <name>Zn(2+)</name>
        <dbReference type="ChEBI" id="CHEBI:29105"/>
    </ligand>
</feature>
<feature type="splice variant" id="VSP_016920" description="In isoform 2." evidence="7 8 9">
    <location>
        <begin position="1"/>
        <end position="517"/>
    </location>
</feature>
<feature type="sequence conflict" description="In Ref. 3; AAH76431." evidence="10" ref="3">
    <original>L</original>
    <variation>F</variation>
    <location>
        <position position="698"/>
    </location>
</feature>
<feature type="sequence conflict" description="In Ref. 3; AAH76431." evidence="10" ref="3">
    <location>
        <begin position="705"/>
        <end position="706"/>
    </location>
</feature>
<feature type="sequence conflict" description="In Ref. 3; AAH44345." evidence="10" ref="3">
    <original>S</original>
    <variation>T</variation>
    <location>
        <position position="724"/>
    </location>
</feature>
<feature type="sequence conflict" description="In Ref. 2; AAQ97829." evidence="10" ref="2">
    <original>S</original>
    <variation>K</variation>
    <location>
        <position position="740"/>
    </location>
</feature>
<feature type="sequence conflict" description="In Ref. 2; AAQ97829 and 3; AAH76431." evidence="10" ref="2 3">
    <original>N</original>
    <variation>K</variation>
    <location>
        <position position="764"/>
    </location>
</feature>
<accession>Q8QHL5</accession>
<accession>Q6DGB9</accession>
<accession>Q6TGW0</accession>
<accession>Q7ZYX8</accession>
<accession>Q8QHL4</accession>
<reference key="1">
    <citation type="journal article" date="2002" name="Biochem. Biophys. Res. Commun.">
        <title>Alternative transcripts of a polyhomeotic gene homolog are expressed in distinct regions of somites during segmentation of zebrafish embryos.</title>
        <authorList>
            <person name="Kawamura A."/>
            <person name="Yamada K."/>
            <person name="Fujimori K."/>
            <person name="Higashinakagawa T."/>
        </authorList>
    </citation>
    <scope>NUCLEOTIDE SEQUENCE [MRNA] (ISOFORMS 1 AND 2)</scope>
</reference>
<reference key="2">
    <citation type="journal article" date="2004" name="Proc. Natl. Acad. Sci. U.S.A.">
        <title>Hematopoietic gene expression profile in zebrafish kidney marrow.</title>
        <authorList>
            <person name="Song H.-D."/>
            <person name="Sun X.-J."/>
            <person name="Deng M."/>
            <person name="Zhang G.-W."/>
            <person name="Zhou Y."/>
            <person name="Wu X.-Y."/>
            <person name="Sheng Y."/>
            <person name="Chen Y."/>
            <person name="Ruan Z."/>
            <person name="Jiang C.-L."/>
            <person name="Fan H.-Y."/>
            <person name="Zon L.I."/>
            <person name="Kanki J.P."/>
            <person name="Liu T.X."/>
            <person name="Look A.T."/>
            <person name="Chen Z."/>
        </authorList>
    </citation>
    <scope>NUCLEOTIDE SEQUENCE [LARGE SCALE MRNA] (ISOFORM 2)</scope>
    <source>
        <tissue>Kidney marrow</tissue>
    </source>
</reference>
<reference key="3">
    <citation type="submission" date="2004-01" db="EMBL/GenBank/DDBJ databases">
        <authorList>
            <consortium name="NIH - Zebrafish Gene Collection (ZGC) project"/>
        </authorList>
    </citation>
    <scope>NUCLEOTIDE SEQUENCE [LARGE SCALE MRNA] (ISOFORM 2)</scope>
    <source>
        <strain>AB</strain>
        <tissue>Embryo</tissue>
    </source>
</reference>
<dbReference type="EMBL" id="AB064940">
    <property type="protein sequence ID" value="BAB83527.1"/>
    <property type="molecule type" value="mRNA"/>
</dbReference>
<dbReference type="EMBL" id="AB064941">
    <property type="protein sequence ID" value="BAB83528.1"/>
    <property type="molecule type" value="mRNA"/>
</dbReference>
<dbReference type="EMBL" id="AY398396">
    <property type="protein sequence ID" value="AAQ97829.1"/>
    <property type="molecule type" value="mRNA"/>
</dbReference>
<dbReference type="EMBL" id="BC044345">
    <property type="protein sequence ID" value="AAH44345.1"/>
    <property type="molecule type" value="mRNA"/>
</dbReference>
<dbReference type="EMBL" id="BC065351">
    <property type="protein sequence ID" value="AAH65351.1"/>
    <property type="molecule type" value="mRNA"/>
</dbReference>
<dbReference type="EMBL" id="BC076431">
    <property type="protein sequence ID" value="AAH76431.1"/>
    <property type="molecule type" value="mRNA"/>
</dbReference>
<dbReference type="RefSeq" id="NP_001129960.1">
    <molecule id="Q8QHL5-2"/>
    <property type="nucleotide sequence ID" value="NM_001136488.2"/>
</dbReference>
<dbReference type="SMR" id="Q8QHL5"/>
<dbReference type="BioGRID" id="79680">
    <property type="interactions" value="4"/>
</dbReference>
<dbReference type="FunCoup" id="Q8QHL5">
    <property type="interactions" value="149"/>
</dbReference>
<dbReference type="STRING" id="7955.ENSDARP00000054361"/>
<dbReference type="PaxDb" id="7955-ENSDARP00000117469"/>
<dbReference type="GeneID" id="171465"/>
<dbReference type="KEGG" id="dre:171465"/>
<dbReference type="AGR" id="ZFIN:ZDB-GENE-020312-1"/>
<dbReference type="CTD" id="171465"/>
<dbReference type="ZFIN" id="ZDB-GENE-020312-1">
    <property type="gene designation" value="phc2a"/>
</dbReference>
<dbReference type="eggNOG" id="ENOG502QS5Q">
    <property type="taxonomic scope" value="Eukaryota"/>
</dbReference>
<dbReference type="HOGENOM" id="CLU_047131_0_0_1"/>
<dbReference type="InParanoid" id="Q8QHL5"/>
<dbReference type="OMA" id="QNLAICS"/>
<dbReference type="OrthoDB" id="2390104at2759"/>
<dbReference type="PhylomeDB" id="Q8QHL5"/>
<dbReference type="TreeFam" id="TF331299"/>
<dbReference type="Reactome" id="R-DRE-2559580">
    <property type="pathway name" value="Oxidative Stress Induced Senescence"/>
</dbReference>
<dbReference type="Reactome" id="R-DRE-3899300">
    <property type="pathway name" value="SUMOylation of transcription cofactors"/>
</dbReference>
<dbReference type="Reactome" id="R-DRE-4570464">
    <property type="pathway name" value="SUMOylation of RNA binding proteins"/>
</dbReference>
<dbReference type="PRO" id="PR:Q8QHL5"/>
<dbReference type="Proteomes" id="UP000000437">
    <property type="component" value="Alternate scaffold 23"/>
</dbReference>
<dbReference type="Proteomes" id="UP000000437">
    <property type="component" value="Chromosome 23"/>
</dbReference>
<dbReference type="Bgee" id="ENSDARG00000056695">
    <property type="expression patterns" value="Expressed in presomitic mesoderm and 29 other cell types or tissues"/>
</dbReference>
<dbReference type="ExpressionAtlas" id="Q8QHL5">
    <property type="expression patterns" value="baseline and differential"/>
</dbReference>
<dbReference type="GO" id="GO:0005634">
    <property type="term" value="C:nucleus"/>
    <property type="evidence" value="ECO:0000318"/>
    <property type="project" value="GO_Central"/>
</dbReference>
<dbReference type="GO" id="GO:0031519">
    <property type="term" value="C:PcG protein complex"/>
    <property type="evidence" value="ECO:0000250"/>
    <property type="project" value="UniProtKB"/>
</dbReference>
<dbReference type="GO" id="GO:0035102">
    <property type="term" value="C:PRC1 complex"/>
    <property type="evidence" value="ECO:0000250"/>
    <property type="project" value="UniProtKB"/>
</dbReference>
<dbReference type="GO" id="GO:0003682">
    <property type="term" value="F:chromatin binding"/>
    <property type="evidence" value="ECO:0000318"/>
    <property type="project" value="GO_Central"/>
</dbReference>
<dbReference type="GO" id="GO:0003677">
    <property type="term" value="F:DNA binding"/>
    <property type="evidence" value="ECO:0007669"/>
    <property type="project" value="UniProtKB-KW"/>
</dbReference>
<dbReference type="GO" id="GO:0042393">
    <property type="term" value="F:histone binding"/>
    <property type="evidence" value="ECO:0000318"/>
    <property type="project" value="GO_Central"/>
</dbReference>
<dbReference type="GO" id="GO:0008270">
    <property type="term" value="F:zinc ion binding"/>
    <property type="evidence" value="ECO:0007669"/>
    <property type="project" value="UniProtKB-KW"/>
</dbReference>
<dbReference type="GO" id="GO:0045892">
    <property type="term" value="P:negative regulation of DNA-templated transcription"/>
    <property type="evidence" value="ECO:0000318"/>
    <property type="project" value="GO_Central"/>
</dbReference>
<dbReference type="CDD" id="cd09577">
    <property type="entry name" value="SAM_Ph1_2_3"/>
    <property type="match status" value="1"/>
</dbReference>
<dbReference type="FunFam" id="1.10.150.50:FF:000011">
    <property type="entry name" value="Polyhomeotic-like protein 2 isoform 1"/>
    <property type="match status" value="1"/>
</dbReference>
<dbReference type="Gene3D" id="3.30.60.160">
    <property type="match status" value="1"/>
</dbReference>
<dbReference type="Gene3D" id="1.10.150.50">
    <property type="entry name" value="Transcription Factor, Ets-1"/>
    <property type="match status" value="1"/>
</dbReference>
<dbReference type="InterPro" id="IPR050548">
    <property type="entry name" value="PcG_chromatin_remod_factors"/>
</dbReference>
<dbReference type="InterPro" id="IPR001660">
    <property type="entry name" value="SAM"/>
</dbReference>
<dbReference type="InterPro" id="IPR013761">
    <property type="entry name" value="SAM/pointed_sf"/>
</dbReference>
<dbReference type="InterPro" id="IPR012313">
    <property type="entry name" value="Znf_FCS"/>
</dbReference>
<dbReference type="InterPro" id="IPR038603">
    <property type="entry name" value="Znf_FCS_sf"/>
</dbReference>
<dbReference type="PANTHER" id="PTHR12247">
    <property type="entry name" value="POLYCOMB GROUP PROTEIN"/>
    <property type="match status" value="1"/>
</dbReference>
<dbReference type="PANTHER" id="PTHR12247:SF86">
    <property type="entry name" value="POLYHOMEOTIC-LIKE PROTEIN 2"/>
    <property type="match status" value="1"/>
</dbReference>
<dbReference type="Pfam" id="PF16616">
    <property type="entry name" value="PHC2_SAM_assoc"/>
    <property type="match status" value="1"/>
</dbReference>
<dbReference type="Pfam" id="PF00536">
    <property type="entry name" value="SAM_1"/>
    <property type="match status" value="1"/>
</dbReference>
<dbReference type="Pfam" id="PF21319">
    <property type="entry name" value="zf-FCS_1"/>
    <property type="match status" value="1"/>
</dbReference>
<dbReference type="SMART" id="SM00454">
    <property type="entry name" value="SAM"/>
    <property type="match status" value="1"/>
</dbReference>
<dbReference type="SUPFAM" id="SSF47769">
    <property type="entry name" value="SAM/Pointed domain"/>
    <property type="match status" value="1"/>
</dbReference>
<dbReference type="PROSITE" id="PS50105">
    <property type="entry name" value="SAM_DOMAIN"/>
    <property type="match status" value="1"/>
</dbReference>
<dbReference type="PROSITE" id="PS51024">
    <property type="entry name" value="ZF_FCS"/>
    <property type="match status" value="1"/>
</dbReference>
<organism>
    <name type="scientific">Danio rerio</name>
    <name type="common">Zebrafish</name>
    <name type="synonym">Brachydanio rerio</name>
    <dbReference type="NCBI Taxonomy" id="7955"/>
    <lineage>
        <taxon>Eukaryota</taxon>
        <taxon>Metazoa</taxon>
        <taxon>Chordata</taxon>
        <taxon>Craniata</taxon>
        <taxon>Vertebrata</taxon>
        <taxon>Euteleostomi</taxon>
        <taxon>Actinopterygii</taxon>
        <taxon>Neopterygii</taxon>
        <taxon>Teleostei</taxon>
        <taxon>Ostariophysi</taxon>
        <taxon>Cypriniformes</taxon>
        <taxon>Danionidae</taxon>
        <taxon>Danioninae</taxon>
        <taxon>Danio</taxon>
    </lineage>
</organism>
<proteinExistence type="evidence at transcript level"/>
<protein>
    <recommendedName>
        <fullName>Polyhomeotic-like protein 2</fullName>
    </recommendedName>
</protein>
<gene>
    <name type="primary">phc2</name>
    <name type="synonym">edr2</name>
    <name type="synonym">ph2</name>
</gene>
<sequence length="827" mass="88680">MEKEQEQGSVASSASVTIPSTTSVSTSTSAGTLSNSSSRQQTVPQISVYGGITDRQTVQVIQQALNRQPSTVAAQYLQQMYAAQQQHLMLQTAALQQQHLSLAAVQQASIVAGRQSCSQHGSTSQQTVASQTTINLATSPAARHLISRAQSGSSVPVCIGQQAVLLGNSSTPTLTASQAQMYLRAQMAQQTNLVQVARSLGRAVPLSSQLIFTPTASVTAIQPEAPAPSINTPPTSGQVQNLALRSQQGALTSTLSQSQLQSLSVKQSVASVTGQSVARLKGLGAEPSPQGTAAKASPAETSSETTAKNDKTSDLTTSVCPSVTSVAGHPFISTAYTQIQTHQLLQQHKQQFVIQQQPQILQRGQAQLLEAAAIHPHTVQAVAIQSALPAQPQQCPIPLLPKVPVTCQQATIFHSTTVSQQALAQNGQAHILTHTKAPPLQLTAVKCQIHPVQIQQGVASQNVPDKDTPVLLEPQLLSIPIQEPTRTELRQSDKESQVKENTQGSVNVKAGVGSPPAMTSGSGNNAPTVTGSAPQNGESKPPPQAVVKPQILTHVIEGFVIQEGAEPFPVERPSLLIENLKQKQHHAYSDLQKHNADSEMEDLSLQELNNQPEPVRTCEFCGNVDFAFNFKRSKRFCSTVCAKRYNVGCTKRMGLFPGKSSPEDTKKPKASDESPKNCSTETRKRNPSIQTTTGASLLSPHPSHPSHGESSQCSDMSSYEEPISPLSNSSFGAPIEHEESFDHSRELTPLLTQHFLASDPTKWNVEDVYEFICSLPGCHEIAEEFRSQEIDGQALMLLKEDHLMSTMNIKLGPALKIFARISMLKDS</sequence>
<keyword id="KW-0025">Alternative splicing</keyword>
<keyword id="KW-0217">Developmental protein</keyword>
<keyword id="KW-0238">DNA-binding</keyword>
<keyword id="KW-0479">Metal-binding</keyword>
<keyword id="KW-0539">Nucleus</keyword>
<keyword id="KW-1185">Reference proteome</keyword>
<keyword id="KW-0862">Zinc</keyword>
<keyword id="KW-0863">Zinc-finger</keyword>